<feature type="chain" id="PRO_0000414234" description="Extracellular sucrase">
    <location>
        <begin position="1"/>
        <end position="413"/>
    </location>
</feature>
<feature type="active site" description="Nucleophile" evidence="1">
    <location>
        <position position="44"/>
    </location>
</feature>
<feature type="active site" description="Proton donor/acceptor" evidence="1">
    <location>
        <position position="276"/>
    </location>
</feature>
<feature type="site" description="Transition state stabilizer" evidence="1">
    <location>
        <position position="192"/>
    </location>
</feature>
<feature type="sequence conflict" description="In Ref. 2; AAC36942." evidence="4" ref="2">
    <original>G</original>
    <variation>A</variation>
    <location>
        <position position="85"/>
    </location>
</feature>
<feature type="sequence conflict" description="In Ref. 2; AAC36942." evidence="4" ref="2">
    <original>PVWP</original>
    <variation>LGMA</variation>
    <location>
        <begin position="404"/>
        <end position="407"/>
    </location>
</feature>
<protein>
    <recommendedName>
        <fullName>Extracellular sucrase</fullName>
        <ecNumber>3.2.1.26</ecNumber>
    </recommendedName>
    <alternativeName>
        <fullName>Beta-fructofuranosidase</fullName>
    </alternativeName>
    <alternativeName>
        <fullName>Invertase</fullName>
    </alternativeName>
    <alternativeName>
        <fullName>Protein B46</fullName>
    </alternativeName>
    <alternativeName>
        <fullName>Saccharase</fullName>
    </alternativeName>
</protein>
<gene>
    <name type="primary">sacC</name>
    <name type="synonym">invB</name>
    <name type="synonym">sucE3</name>
    <name type="ordered locus">Zmob_0915</name>
</gene>
<accession>F8DT27</accession>
<accession>Q5NQK5</accession>
<accession>Q60115</accession>
<accession>Q60117</accession>
<accession>Q60125</accession>
<sequence length="413" mass="46100">MFNFNASRWTRAQAMKVNKFDLTTSMPEIGTDFPIMRDDLWLWDTWPLRDINGNPVSFKGWNVIFSLVADRNIPWNDRHSHARIGYFYSKDGKSWVYGGHLLQESANTRTAEWSGGTIMAPGSRNQVETFFTSTLFDKNGVREAVAAVTKGRIYADSEGVWFKGFDQSTDLFQADGLFYQNYAENNLWNFRDPHVFINPEDGETYALFEANVATVRGEDDIGEDEIGPVPANTVVPKDANLCSASIGIARCLSPDRTEWELLPPLLTAFGVNDQMERPHVIFQNGLTYLFTISHDSTYADGLTGSDGLYGFVSENGIFGPYEPLNGSGLVLGGPASQPTEAYAHYIMNNGLVESFINEIIDPKSGKVIAGGSLAPTVRVELQGHETFATEVFDYGYIPASYAWPVWPFPDRRK</sequence>
<reference key="1">
    <citation type="journal article" date="1994" name="Biochim. Biophys. Acta">
        <title>Nucleotide and derived amino acid sequences of an extracellular sucrase gene (invB) of Zymomonas mobilis ZM1 (ATCC10988).</title>
        <authorList>
            <person name="Song K.B."/>
            <person name="Lee S.K."/>
            <person name="Joo H.K."/>
            <person name="Rhee S.-K."/>
        </authorList>
    </citation>
    <scope>NUCLEOTIDE SEQUENCE [GENOMIC DNA]</scope>
    <scope>PROTEIN SEQUENCE OF 1-10</scope>
    <scope>SUBCELLULAR LOCATION</scope>
    <source>
        <strain>ATCC 10988 / DSM 424 / CCUG 17860 / LMG 404 / NCIMB 8938 / NRRL B-806 / ZM1</strain>
    </source>
</reference>
<reference key="2">
    <citation type="journal article" date="1995" name="Arch. Microbiol.">
        <title>Molecular cloning and characterization of the extracellular sucrase gene (sacC) of Zymomonas mobilis.</title>
        <authorList>
            <person name="Kannan R."/>
            <person name="Mukundan G."/>
            <person name="Ait-Abdelkader N."/>
            <person name="Augier-Magro V."/>
            <person name="Baratti J."/>
            <person name="Gunasekaran P."/>
        </authorList>
    </citation>
    <scope>NUCLEOTIDE SEQUENCE [GENOMIC DNA]</scope>
    <scope>CATALYTIC ACTIVITY</scope>
    <scope>SUBCELLULAR LOCATION</scope>
    <source>
        <strain>ATCC 10988 / DSM 424 / CCUG 17860 / LMG 404 / NCIMB 8938 / NRRL B-806 / ZM1</strain>
    </source>
</reference>
<reference key="3">
    <citation type="journal article" date="2011" name="J. Bacteriol.">
        <title>Genome sequence of the ethanol-producing Zymomonas mobilis subsp. mobilis lectotype strain ATCC 10988.</title>
        <authorList>
            <person name="Pappas K.M."/>
            <person name="Kouvelis V.N."/>
            <person name="Saunders E."/>
            <person name="Brettin T.S."/>
            <person name="Bruce D."/>
            <person name="Detter C."/>
            <person name="Balakireva M."/>
            <person name="Han C.S."/>
            <person name="Savvakis G."/>
            <person name="Kyrpides N.C."/>
            <person name="Typas M.A."/>
        </authorList>
    </citation>
    <scope>NUCLEOTIDE SEQUENCE [LARGE SCALE GENOMIC DNA]</scope>
    <source>
        <strain>ATCC 10988 / DSM 424 / CCUG 17860 / LMG 404 / NCIMB 8938 / NRRL B-806 / ZM1</strain>
    </source>
</reference>
<proteinExistence type="evidence at protein level"/>
<keyword id="KW-0903">Direct protein sequencing</keyword>
<keyword id="KW-0326">Glycosidase</keyword>
<keyword id="KW-0378">Hydrolase</keyword>
<keyword id="KW-0964">Secreted</keyword>
<name>INVB_ZYMMA</name>
<organism>
    <name type="scientific">Zymomonas mobilis subsp. mobilis (strain ATCC 10988 / DSM 424 / LMG 404 / NCIMB 8938 / NRRL B-806 / ZM1)</name>
    <dbReference type="NCBI Taxonomy" id="555217"/>
    <lineage>
        <taxon>Bacteria</taxon>
        <taxon>Pseudomonadati</taxon>
        <taxon>Pseudomonadota</taxon>
        <taxon>Alphaproteobacteria</taxon>
        <taxon>Sphingomonadales</taxon>
        <taxon>Zymomonadaceae</taxon>
        <taxon>Zymomonas</taxon>
    </lineage>
</organism>
<comment type="catalytic activity">
    <reaction evidence="2">
        <text>Hydrolysis of terminal non-reducing beta-D-fructofuranoside residues in beta-D-fructofuranosides.</text>
        <dbReference type="EC" id="3.2.1.26"/>
    </reaction>
</comment>
<comment type="subcellular location">
    <subcellularLocation>
        <location evidence="2 3">Secreted</location>
    </subcellularLocation>
</comment>
<comment type="similarity">
    <text evidence="4">Belongs to the glycosyl hydrolase 68 family.</text>
</comment>
<evidence type="ECO:0000250" key="1">
    <source>
        <dbReference type="UniProtKB" id="Q74K42"/>
    </source>
</evidence>
<evidence type="ECO:0000269" key="2">
    <source>
    </source>
</evidence>
<evidence type="ECO:0000269" key="3">
    <source>
    </source>
</evidence>
<evidence type="ECO:0000305" key="4"/>
<dbReference type="EC" id="3.2.1.26"/>
<dbReference type="EMBL" id="AF081588">
    <property type="protein sequence ID" value="AAA61488.1"/>
    <property type="molecule type" value="Genomic_DNA"/>
</dbReference>
<dbReference type="EMBL" id="L33403">
    <property type="protein sequence ID" value="AAC36942.1"/>
    <property type="molecule type" value="Genomic_DNA"/>
</dbReference>
<dbReference type="EMBL" id="CP002850">
    <property type="protein sequence ID" value="AEH62750.1"/>
    <property type="molecule type" value="Genomic_DNA"/>
</dbReference>
<dbReference type="PIR" id="JC2520">
    <property type="entry name" value="JC2520"/>
</dbReference>
<dbReference type="PIR" id="S47527">
    <property type="entry name" value="S47527"/>
</dbReference>
<dbReference type="RefSeq" id="WP_012817354.1">
    <property type="nucleotide sequence ID" value="NC_017262.1"/>
</dbReference>
<dbReference type="SMR" id="F8DT27"/>
<dbReference type="CAZy" id="GH68">
    <property type="family name" value="Glycoside Hydrolase Family 68"/>
</dbReference>
<dbReference type="GeneID" id="79904422"/>
<dbReference type="KEGG" id="zmm:Zmob_0915"/>
<dbReference type="eggNOG" id="COG1621">
    <property type="taxonomic scope" value="Bacteria"/>
</dbReference>
<dbReference type="HOGENOM" id="CLU_031862_1_0_5"/>
<dbReference type="OrthoDB" id="3359526at2"/>
<dbReference type="Proteomes" id="UP000001494">
    <property type="component" value="Chromosome"/>
</dbReference>
<dbReference type="GO" id="GO:0005576">
    <property type="term" value="C:extracellular region"/>
    <property type="evidence" value="ECO:0007669"/>
    <property type="project" value="UniProtKB-SubCell"/>
</dbReference>
<dbReference type="GO" id="GO:0004564">
    <property type="term" value="F:beta-fructofuranosidase activity"/>
    <property type="evidence" value="ECO:0007669"/>
    <property type="project" value="UniProtKB-EC"/>
</dbReference>
<dbReference type="GO" id="GO:0050053">
    <property type="term" value="F:levansucrase activity"/>
    <property type="evidence" value="ECO:0007669"/>
    <property type="project" value="InterPro"/>
</dbReference>
<dbReference type="GO" id="GO:0009758">
    <property type="term" value="P:carbohydrate utilization"/>
    <property type="evidence" value="ECO:0007669"/>
    <property type="project" value="InterPro"/>
</dbReference>
<dbReference type="CDD" id="cd08997">
    <property type="entry name" value="GH68"/>
    <property type="match status" value="1"/>
</dbReference>
<dbReference type="Gene3D" id="2.115.10.20">
    <property type="entry name" value="Glycosyl hydrolase domain, family 43"/>
    <property type="match status" value="1"/>
</dbReference>
<dbReference type="InterPro" id="IPR003469">
    <property type="entry name" value="Glyco_hydro_68"/>
</dbReference>
<dbReference type="InterPro" id="IPR023296">
    <property type="entry name" value="Glyco_hydro_beta-prop_sf"/>
</dbReference>
<dbReference type="Pfam" id="PF02435">
    <property type="entry name" value="Glyco_hydro_68"/>
    <property type="match status" value="1"/>
</dbReference>
<dbReference type="SUPFAM" id="SSF75005">
    <property type="entry name" value="Arabinanase/levansucrase/invertase"/>
    <property type="match status" value="1"/>
</dbReference>